<accession>P65843</accession>
<accession>A0A1R3XZ33</accession>
<accession>O33210</accession>
<accession>X2BI85</accession>
<organism>
    <name type="scientific">Mycobacterium bovis (strain ATCC BAA-935 / AF2122/97)</name>
    <dbReference type="NCBI Taxonomy" id="233413"/>
    <lineage>
        <taxon>Bacteria</taxon>
        <taxon>Bacillati</taxon>
        <taxon>Actinomycetota</taxon>
        <taxon>Actinomycetes</taxon>
        <taxon>Mycobacteriales</taxon>
        <taxon>Mycobacteriaceae</taxon>
        <taxon>Mycobacterium</taxon>
        <taxon>Mycobacterium tuberculosis complex</taxon>
    </lineage>
</organism>
<sequence>MMAEPEESREPRGIRLQKVLSQAGIASRRAAEKMIVDGRVEVDGHVVTELGTRVDPQVAVVRVDGARVVLDDSLVYLALNKPRGMHSTMSDDRGRPCIGDLIERKVRGTKKLFHVGRLDADTEGLMLLTNDGELAHRLMHPSHEVPKTYLATVTGSVPRGLGRTLRAGIELDDGPAFVDDFAVVDAIPGKTLVRVTLHEGRNRIVRRLLAAAGFPVEALVRTDIGAVSLGKQRPGSVRALRSNEIGQLYQAVGL</sequence>
<gene>
    <name type="ordered locus">BQ2027_MB1738</name>
</gene>
<evidence type="ECO:0000250" key="1"/>
<evidence type="ECO:0000255" key="2">
    <source>
        <dbReference type="PROSITE-ProRule" id="PRU00182"/>
    </source>
</evidence>
<evidence type="ECO:0000305" key="3"/>
<feature type="chain" id="PRO_0000100030" description="Uncharacterized RNA pseudouridine synthase Mb1738">
    <location>
        <begin position="1"/>
        <end position="254"/>
    </location>
</feature>
<feature type="domain" description="S4 RNA-binding" evidence="2">
    <location>
        <begin position="14"/>
        <end position="81"/>
    </location>
</feature>
<feature type="active site" description="Nucleophile" evidence="1">
    <location>
        <position position="119"/>
    </location>
</feature>
<dbReference type="EC" id="5.4.99.-"/>
<dbReference type="EMBL" id="LT708304">
    <property type="protein sequence ID" value="SIU00342.1"/>
    <property type="molecule type" value="Genomic_DNA"/>
</dbReference>
<dbReference type="RefSeq" id="NP_855391.1">
    <property type="nucleotide sequence ID" value="NC_002945.3"/>
</dbReference>
<dbReference type="RefSeq" id="WP_003408439.1">
    <property type="nucleotide sequence ID" value="NC_002945.4"/>
</dbReference>
<dbReference type="SMR" id="P65843"/>
<dbReference type="KEGG" id="mbo:BQ2027_MB1738"/>
<dbReference type="PATRIC" id="fig|233413.5.peg.1896"/>
<dbReference type="Proteomes" id="UP000001419">
    <property type="component" value="Chromosome"/>
</dbReference>
<dbReference type="GO" id="GO:0003723">
    <property type="term" value="F:RNA binding"/>
    <property type="evidence" value="ECO:0007669"/>
    <property type="project" value="UniProtKB-KW"/>
</dbReference>
<dbReference type="GO" id="GO:0120159">
    <property type="term" value="F:rRNA pseudouridine synthase activity"/>
    <property type="evidence" value="ECO:0007669"/>
    <property type="project" value="UniProtKB-ARBA"/>
</dbReference>
<dbReference type="GO" id="GO:0000455">
    <property type="term" value="P:enzyme-directed rRNA pseudouridine synthesis"/>
    <property type="evidence" value="ECO:0007669"/>
    <property type="project" value="UniProtKB-ARBA"/>
</dbReference>
<dbReference type="CDD" id="cd02870">
    <property type="entry name" value="PseudoU_synth_RsuA_like"/>
    <property type="match status" value="1"/>
</dbReference>
<dbReference type="CDD" id="cd00165">
    <property type="entry name" value="S4"/>
    <property type="match status" value="1"/>
</dbReference>
<dbReference type="FunFam" id="3.10.290.10:FF:000003">
    <property type="entry name" value="Pseudouridine synthase"/>
    <property type="match status" value="1"/>
</dbReference>
<dbReference type="Gene3D" id="3.30.70.1560">
    <property type="entry name" value="Alpha-L RNA-binding motif"/>
    <property type="match status" value="1"/>
</dbReference>
<dbReference type="Gene3D" id="3.30.70.580">
    <property type="entry name" value="Pseudouridine synthase I, catalytic domain, N-terminal subdomain"/>
    <property type="match status" value="1"/>
</dbReference>
<dbReference type="Gene3D" id="3.10.290.10">
    <property type="entry name" value="RNA-binding S4 domain"/>
    <property type="match status" value="1"/>
</dbReference>
<dbReference type="InterPro" id="IPR042092">
    <property type="entry name" value="PsdUridine_s_RsuA/RluB/E/F_cat"/>
</dbReference>
<dbReference type="InterPro" id="IPR020103">
    <property type="entry name" value="PsdUridine_synth_cat_dom_sf"/>
</dbReference>
<dbReference type="InterPro" id="IPR006145">
    <property type="entry name" value="PsdUridine_synth_RsuA/RluA"/>
</dbReference>
<dbReference type="InterPro" id="IPR000748">
    <property type="entry name" value="PsdUridine_synth_RsuA/RluB/E/F"/>
</dbReference>
<dbReference type="InterPro" id="IPR018496">
    <property type="entry name" value="PsdUridine_synth_RsuA/RluB_CS"/>
</dbReference>
<dbReference type="InterPro" id="IPR050343">
    <property type="entry name" value="RsuA_PseudoU_synthase"/>
</dbReference>
<dbReference type="InterPro" id="IPR002942">
    <property type="entry name" value="S4_RNA-bd"/>
</dbReference>
<dbReference type="InterPro" id="IPR036986">
    <property type="entry name" value="S4_RNA-bd_sf"/>
</dbReference>
<dbReference type="InterPro" id="IPR020094">
    <property type="entry name" value="TruA/RsuA/RluB/E/F_N"/>
</dbReference>
<dbReference type="NCBIfam" id="TIGR00093">
    <property type="entry name" value="pseudouridine synthase"/>
    <property type="match status" value="1"/>
</dbReference>
<dbReference type="PANTHER" id="PTHR47683">
    <property type="entry name" value="PSEUDOURIDINE SYNTHASE FAMILY PROTEIN-RELATED"/>
    <property type="match status" value="1"/>
</dbReference>
<dbReference type="PANTHER" id="PTHR47683:SF2">
    <property type="entry name" value="RNA-BINDING S4 DOMAIN-CONTAINING PROTEIN"/>
    <property type="match status" value="1"/>
</dbReference>
<dbReference type="Pfam" id="PF00849">
    <property type="entry name" value="PseudoU_synth_2"/>
    <property type="match status" value="1"/>
</dbReference>
<dbReference type="Pfam" id="PF01479">
    <property type="entry name" value="S4"/>
    <property type="match status" value="1"/>
</dbReference>
<dbReference type="SMART" id="SM00363">
    <property type="entry name" value="S4"/>
    <property type="match status" value="1"/>
</dbReference>
<dbReference type="SUPFAM" id="SSF55174">
    <property type="entry name" value="Alpha-L RNA-binding motif"/>
    <property type="match status" value="1"/>
</dbReference>
<dbReference type="SUPFAM" id="SSF55120">
    <property type="entry name" value="Pseudouridine synthase"/>
    <property type="match status" value="1"/>
</dbReference>
<dbReference type="PROSITE" id="PS01149">
    <property type="entry name" value="PSI_RSU"/>
    <property type="match status" value="1"/>
</dbReference>
<dbReference type="PROSITE" id="PS50889">
    <property type="entry name" value="S4"/>
    <property type="match status" value="1"/>
</dbReference>
<name>Y1738_MYCBO</name>
<comment type="catalytic activity">
    <reaction>
        <text>a uridine in RNA = a pseudouridine in RNA</text>
        <dbReference type="Rhea" id="RHEA:48348"/>
        <dbReference type="Rhea" id="RHEA-COMP:12068"/>
        <dbReference type="Rhea" id="RHEA-COMP:12069"/>
        <dbReference type="ChEBI" id="CHEBI:65314"/>
        <dbReference type="ChEBI" id="CHEBI:65315"/>
    </reaction>
</comment>
<comment type="similarity">
    <text evidence="3">Belongs to the pseudouridine synthase RsuA family.</text>
</comment>
<keyword id="KW-0413">Isomerase</keyword>
<keyword id="KW-1185">Reference proteome</keyword>
<keyword id="KW-0694">RNA-binding</keyword>
<proteinExistence type="inferred from homology"/>
<protein>
    <recommendedName>
        <fullName>Uncharacterized RNA pseudouridine synthase Mb1738</fullName>
        <ecNumber>5.4.99.-</ecNumber>
    </recommendedName>
    <alternativeName>
        <fullName>RNA pseudouridylate synthase</fullName>
    </alternativeName>
    <alternativeName>
        <fullName>RNA-uridine isomerase</fullName>
    </alternativeName>
</protein>
<reference key="1">
    <citation type="journal article" date="2003" name="Proc. Natl. Acad. Sci. U.S.A.">
        <title>The complete genome sequence of Mycobacterium bovis.</title>
        <authorList>
            <person name="Garnier T."/>
            <person name="Eiglmeier K."/>
            <person name="Camus J.-C."/>
            <person name="Medina N."/>
            <person name="Mansoor H."/>
            <person name="Pryor M."/>
            <person name="Duthoy S."/>
            <person name="Grondin S."/>
            <person name="Lacroix C."/>
            <person name="Monsempe C."/>
            <person name="Simon S."/>
            <person name="Harris B."/>
            <person name="Atkin R."/>
            <person name="Doggett J."/>
            <person name="Mayes R."/>
            <person name="Keating L."/>
            <person name="Wheeler P.R."/>
            <person name="Parkhill J."/>
            <person name="Barrell B.G."/>
            <person name="Cole S.T."/>
            <person name="Gordon S.V."/>
            <person name="Hewinson R.G."/>
        </authorList>
    </citation>
    <scope>NUCLEOTIDE SEQUENCE [LARGE SCALE GENOMIC DNA]</scope>
    <source>
        <strain>ATCC BAA-935 / AF2122/97</strain>
    </source>
</reference>
<reference key="2">
    <citation type="journal article" date="2017" name="Genome Announc.">
        <title>Updated reference genome sequence and annotation of Mycobacterium bovis AF2122/97.</title>
        <authorList>
            <person name="Malone K.M."/>
            <person name="Farrell D."/>
            <person name="Stuber T.P."/>
            <person name="Schubert O.T."/>
            <person name="Aebersold R."/>
            <person name="Robbe-Austerman S."/>
            <person name="Gordon S.V."/>
        </authorList>
    </citation>
    <scope>NUCLEOTIDE SEQUENCE [LARGE SCALE GENOMIC DNA]</scope>
    <scope>GENOME REANNOTATION</scope>
    <source>
        <strain>ATCC BAA-935 / AF2122/97</strain>
    </source>
</reference>